<name>TRUA_STRPN</name>
<sequence length="249" mass="28380">MTRYKATISYDGYAFAGFQRQPHARSVQEEIEKTLTRLNKGQAITVHGAGRTDSGVHALGQVIHFDLPYQMDEEKLRFALDTQSPEDIDVISIELVADDFHCRYAKHSKTYEFTVDRGRPKNPMRRHYATHFPYPLDVERMQIAIKKLEGTHDFTGFTASGTSVEDKVRTITEASLIVDETGQFLTFTFSGNGFLYKQIRNMVGTLLKIGNNRMPVEQIDLILEKKDRQLAGPTAAPNGLYLKEIRYEE</sequence>
<proteinExistence type="inferred from homology"/>
<protein>
    <recommendedName>
        <fullName evidence="1">tRNA pseudouridine synthase A</fullName>
        <ecNumber evidence="1">5.4.99.12</ecNumber>
    </recommendedName>
    <alternativeName>
        <fullName evidence="1">tRNA pseudouridine(38-40) synthase</fullName>
    </alternativeName>
    <alternativeName>
        <fullName evidence="1">tRNA pseudouridylate synthase I</fullName>
    </alternativeName>
    <alternativeName>
        <fullName evidence="1">tRNA-uridine isomerase I</fullName>
    </alternativeName>
</protein>
<reference key="1">
    <citation type="journal article" date="2001" name="Science">
        <title>Complete genome sequence of a virulent isolate of Streptococcus pneumoniae.</title>
        <authorList>
            <person name="Tettelin H."/>
            <person name="Nelson K.E."/>
            <person name="Paulsen I.T."/>
            <person name="Eisen J.A."/>
            <person name="Read T.D."/>
            <person name="Peterson S.N."/>
            <person name="Heidelberg J.F."/>
            <person name="DeBoy R.T."/>
            <person name="Haft D.H."/>
            <person name="Dodson R.J."/>
            <person name="Durkin A.S."/>
            <person name="Gwinn M.L."/>
            <person name="Kolonay J.F."/>
            <person name="Nelson W.C."/>
            <person name="Peterson J.D."/>
            <person name="Umayam L.A."/>
            <person name="White O."/>
            <person name="Salzberg S.L."/>
            <person name="Lewis M.R."/>
            <person name="Radune D."/>
            <person name="Holtzapple E.K."/>
            <person name="Khouri H.M."/>
            <person name="Wolf A.M."/>
            <person name="Utterback T.R."/>
            <person name="Hansen C.L."/>
            <person name="McDonald L.A."/>
            <person name="Feldblyum T.V."/>
            <person name="Angiuoli S.V."/>
            <person name="Dickinson T."/>
            <person name="Hickey E.K."/>
            <person name="Holt I.E."/>
            <person name="Loftus B.J."/>
            <person name="Yang F."/>
            <person name="Smith H.O."/>
            <person name="Venter J.C."/>
            <person name="Dougherty B.A."/>
            <person name="Morrison D.A."/>
            <person name="Hollingshead S.K."/>
            <person name="Fraser C.M."/>
        </authorList>
    </citation>
    <scope>NUCLEOTIDE SEQUENCE [LARGE SCALE GENOMIC DNA]</scope>
    <source>
        <strain>ATCC BAA-334 / TIGR4</strain>
    </source>
</reference>
<feature type="chain" id="PRO_0000057462" description="tRNA pseudouridine synthase A">
    <location>
        <begin position="1"/>
        <end position="249"/>
    </location>
</feature>
<feature type="active site" description="Nucleophile" evidence="1">
    <location>
        <position position="53"/>
    </location>
</feature>
<feature type="binding site" evidence="1">
    <location>
        <position position="111"/>
    </location>
    <ligand>
        <name>substrate</name>
    </ligand>
</feature>
<organism>
    <name type="scientific">Streptococcus pneumoniae serotype 4 (strain ATCC BAA-334 / TIGR4)</name>
    <dbReference type="NCBI Taxonomy" id="170187"/>
    <lineage>
        <taxon>Bacteria</taxon>
        <taxon>Bacillati</taxon>
        <taxon>Bacillota</taxon>
        <taxon>Bacilli</taxon>
        <taxon>Lactobacillales</taxon>
        <taxon>Streptococcaceae</taxon>
        <taxon>Streptococcus</taxon>
    </lineage>
</organism>
<gene>
    <name evidence="1" type="primary">truA</name>
    <name type="ordered locus">SP_1599</name>
</gene>
<keyword id="KW-0413">Isomerase</keyword>
<keyword id="KW-1185">Reference proteome</keyword>
<keyword id="KW-0819">tRNA processing</keyword>
<accession>Q97PL0</accession>
<evidence type="ECO:0000255" key="1">
    <source>
        <dbReference type="HAMAP-Rule" id="MF_00171"/>
    </source>
</evidence>
<dbReference type="EC" id="5.4.99.12" evidence="1"/>
<dbReference type="EMBL" id="AE005672">
    <property type="protein sequence ID" value="AAK75683.1"/>
    <property type="molecule type" value="Genomic_DNA"/>
</dbReference>
<dbReference type="PIR" id="B95186">
    <property type="entry name" value="B95186"/>
</dbReference>
<dbReference type="RefSeq" id="WP_000199188.1">
    <property type="nucleotide sequence ID" value="NZ_CP155539.1"/>
</dbReference>
<dbReference type="SMR" id="Q97PL0"/>
<dbReference type="PaxDb" id="170187-SP_1599"/>
<dbReference type="EnsemblBacteria" id="AAK75683">
    <property type="protein sequence ID" value="AAK75683"/>
    <property type="gene ID" value="SP_1599"/>
</dbReference>
<dbReference type="KEGG" id="spn:SP_1599"/>
<dbReference type="eggNOG" id="COG0101">
    <property type="taxonomic scope" value="Bacteria"/>
</dbReference>
<dbReference type="PhylomeDB" id="Q97PL0"/>
<dbReference type="BioCyc" id="SPNE170187:G1FZB-1618-MONOMER"/>
<dbReference type="Proteomes" id="UP000000585">
    <property type="component" value="Chromosome"/>
</dbReference>
<dbReference type="GO" id="GO:0003723">
    <property type="term" value="F:RNA binding"/>
    <property type="evidence" value="ECO:0007669"/>
    <property type="project" value="InterPro"/>
</dbReference>
<dbReference type="GO" id="GO:0160147">
    <property type="term" value="F:tRNA pseudouridine(38-40) synthase activity"/>
    <property type="evidence" value="ECO:0007669"/>
    <property type="project" value="UniProtKB-EC"/>
</dbReference>
<dbReference type="GO" id="GO:0031119">
    <property type="term" value="P:tRNA pseudouridine synthesis"/>
    <property type="evidence" value="ECO:0007669"/>
    <property type="project" value="UniProtKB-UniRule"/>
</dbReference>
<dbReference type="CDD" id="cd02570">
    <property type="entry name" value="PseudoU_synth_EcTruA"/>
    <property type="match status" value="1"/>
</dbReference>
<dbReference type="FunFam" id="3.30.70.580:FF:000001">
    <property type="entry name" value="tRNA pseudouridine synthase A"/>
    <property type="match status" value="1"/>
</dbReference>
<dbReference type="FunFam" id="3.30.70.660:FF:000009">
    <property type="entry name" value="tRNA pseudouridine synthase A"/>
    <property type="match status" value="1"/>
</dbReference>
<dbReference type="Gene3D" id="3.30.70.660">
    <property type="entry name" value="Pseudouridine synthase I, catalytic domain, C-terminal subdomain"/>
    <property type="match status" value="1"/>
</dbReference>
<dbReference type="Gene3D" id="3.30.70.580">
    <property type="entry name" value="Pseudouridine synthase I, catalytic domain, N-terminal subdomain"/>
    <property type="match status" value="1"/>
</dbReference>
<dbReference type="HAMAP" id="MF_00171">
    <property type="entry name" value="TruA"/>
    <property type="match status" value="1"/>
</dbReference>
<dbReference type="InterPro" id="IPR020103">
    <property type="entry name" value="PsdUridine_synth_cat_dom_sf"/>
</dbReference>
<dbReference type="InterPro" id="IPR001406">
    <property type="entry name" value="PsdUridine_synth_TruA"/>
</dbReference>
<dbReference type="InterPro" id="IPR020097">
    <property type="entry name" value="PsdUridine_synth_TruA_a/b_dom"/>
</dbReference>
<dbReference type="InterPro" id="IPR020095">
    <property type="entry name" value="PsdUridine_synth_TruA_C"/>
</dbReference>
<dbReference type="InterPro" id="IPR020094">
    <property type="entry name" value="TruA/RsuA/RluB/E/F_N"/>
</dbReference>
<dbReference type="NCBIfam" id="TIGR00071">
    <property type="entry name" value="hisT_truA"/>
    <property type="match status" value="1"/>
</dbReference>
<dbReference type="PANTHER" id="PTHR11142">
    <property type="entry name" value="PSEUDOURIDYLATE SYNTHASE"/>
    <property type="match status" value="1"/>
</dbReference>
<dbReference type="PANTHER" id="PTHR11142:SF0">
    <property type="entry name" value="TRNA PSEUDOURIDINE SYNTHASE-LIKE 1"/>
    <property type="match status" value="1"/>
</dbReference>
<dbReference type="Pfam" id="PF01416">
    <property type="entry name" value="PseudoU_synth_1"/>
    <property type="match status" value="2"/>
</dbReference>
<dbReference type="PIRSF" id="PIRSF001430">
    <property type="entry name" value="tRNA_psdUrid_synth"/>
    <property type="match status" value="1"/>
</dbReference>
<dbReference type="SUPFAM" id="SSF55120">
    <property type="entry name" value="Pseudouridine synthase"/>
    <property type="match status" value="1"/>
</dbReference>
<comment type="function">
    <text evidence="1">Formation of pseudouridine at positions 38, 39 and 40 in the anticodon stem and loop of transfer RNAs.</text>
</comment>
<comment type="catalytic activity">
    <reaction evidence="1">
        <text>uridine(38/39/40) in tRNA = pseudouridine(38/39/40) in tRNA</text>
        <dbReference type="Rhea" id="RHEA:22376"/>
        <dbReference type="Rhea" id="RHEA-COMP:10085"/>
        <dbReference type="Rhea" id="RHEA-COMP:10087"/>
        <dbReference type="ChEBI" id="CHEBI:65314"/>
        <dbReference type="ChEBI" id="CHEBI:65315"/>
        <dbReference type="EC" id="5.4.99.12"/>
    </reaction>
</comment>
<comment type="subunit">
    <text evidence="1">Homodimer.</text>
</comment>
<comment type="similarity">
    <text evidence="1">Belongs to the tRNA pseudouridine synthase TruA family.</text>
</comment>